<accession>Q9LU15</accession>
<accession>O04321</accession>
<protein>
    <recommendedName>
        <fullName>Histidine-containing phosphotransfer protein 4</fullName>
    </recommendedName>
</protein>
<dbReference type="EMBL" id="AB041766">
    <property type="protein sequence ID" value="BAA94763.1"/>
    <property type="molecule type" value="mRNA"/>
</dbReference>
<dbReference type="EMBL" id="AB023046">
    <property type="protein sequence ID" value="BAB01275.1"/>
    <property type="status" value="ALT_SEQ"/>
    <property type="molecule type" value="Genomic_DNA"/>
</dbReference>
<dbReference type="EMBL" id="AC001645">
    <property type="protein sequence ID" value="AAB63642.1"/>
    <property type="status" value="ALT_SEQ"/>
    <property type="molecule type" value="Genomic_DNA"/>
</dbReference>
<dbReference type="EMBL" id="CP002686">
    <property type="protein sequence ID" value="AEE75802.1"/>
    <property type="molecule type" value="Genomic_DNA"/>
</dbReference>
<dbReference type="RefSeq" id="NP_566544.1">
    <molecule id="Q9LU15-1"/>
    <property type="nucleotide sequence ID" value="NM_112507.1"/>
</dbReference>
<dbReference type="SMR" id="Q9LU15"/>
<dbReference type="BioGRID" id="6217">
    <property type="interactions" value="10"/>
</dbReference>
<dbReference type="FunCoup" id="Q9LU15">
    <property type="interactions" value="294"/>
</dbReference>
<dbReference type="IntAct" id="Q9LU15">
    <property type="interactions" value="9"/>
</dbReference>
<dbReference type="STRING" id="3702.Q9LU15"/>
<dbReference type="PaxDb" id="3702-AT3G16360.2"/>
<dbReference type="ProteomicsDB" id="244995">
    <molecule id="Q9LU15-1"/>
</dbReference>
<dbReference type="EnsemblPlants" id="AT3G16360.1">
    <molecule id="Q9LU15-1"/>
    <property type="protein sequence ID" value="AT3G16360.1"/>
    <property type="gene ID" value="AT3G16360"/>
</dbReference>
<dbReference type="GeneID" id="820883"/>
<dbReference type="Gramene" id="AT3G16360.1">
    <molecule id="Q9LU15-1"/>
    <property type="protein sequence ID" value="AT3G16360.1"/>
    <property type="gene ID" value="AT3G16360"/>
</dbReference>
<dbReference type="KEGG" id="ath:AT3G16360"/>
<dbReference type="Araport" id="AT3G16360"/>
<dbReference type="TAIR" id="AT3G16360">
    <property type="gene designation" value="AHP4"/>
</dbReference>
<dbReference type="eggNOG" id="KOG4747">
    <property type="taxonomic scope" value="Eukaryota"/>
</dbReference>
<dbReference type="HOGENOM" id="CLU_111777_1_0_1"/>
<dbReference type="InParanoid" id="Q9LU15"/>
<dbReference type="PhylomeDB" id="Q9LU15"/>
<dbReference type="PRO" id="PR:Q9LU15"/>
<dbReference type="Proteomes" id="UP000006548">
    <property type="component" value="Chromosome 3"/>
</dbReference>
<dbReference type="ExpressionAtlas" id="Q9LU15">
    <property type="expression patterns" value="baseline and differential"/>
</dbReference>
<dbReference type="GO" id="GO:0005737">
    <property type="term" value="C:cytoplasm"/>
    <property type="evidence" value="ECO:0000250"/>
    <property type="project" value="UniProtKB"/>
</dbReference>
<dbReference type="GO" id="GO:0005829">
    <property type="term" value="C:cytosol"/>
    <property type="evidence" value="ECO:0007669"/>
    <property type="project" value="UniProtKB-SubCell"/>
</dbReference>
<dbReference type="GO" id="GO:0005634">
    <property type="term" value="C:nucleus"/>
    <property type="evidence" value="ECO:0000250"/>
    <property type="project" value="UniProtKB"/>
</dbReference>
<dbReference type="GO" id="GO:0009927">
    <property type="term" value="F:histidine phosphotransfer kinase activity"/>
    <property type="evidence" value="ECO:0007669"/>
    <property type="project" value="InterPro"/>
</dbReference>
<dbReference type="GO" id="GO:0043424">
    <property type="term" value="F:protein histidine kinase binding"/>
    <property type="evidence" value="ECO:0007669"/>
    <property type="project" value="InterPro"/>
</dbReference>
<dbReference type="GO" id="GO:0009736">
    <property type="term" value="P:cytokinin-activated signaling pathway"/>
    <property type="evidence" value="ECO:0007669"/>
    <property type="project" value="UniProtKB-KW"/>
</dbReference>
<dbReference type="GO" id="GO:0000160">
    <property type="term" value="P:phosphorelay signal transduction system"/>
    <property type="evidence" value="ECO:0007669"/>
    <property type="project" value="UniProtKB-KW"/>
</dbReference>
<dbReference type="FunFam" id="1.20.120.160:FF:000005">
    <property type="entry name" value="Histidine-containing phosphotransfer protein 4"/>
    <property type="match status" value="1"/>
</dbReference>
<dbReference type="Gene3D" id="1.20.120.160">
    <property type="entry name" value="HPT domain"/>
    <property type="match status" value="1"/>
</dbReference>
<dbReference type="InterPro" id="IPR045871">
    <property type="entry name" value="AHP1-5/YPD1"/>
</dbReference>
<dbReference type="InterPro" id="IPR036641">
    <property type="entry name" value="HPT_dom_sf"/>
</dbReference>
<dbReference type="InterPro" id="IPR008207">
    <property type="entry name" value="Sig_transdc_His_kin_Hpt_dom"/>
</dbReference>
<dbReference type="PANTHER" id="PTHR28242:SF43">
    <property type="entry name" value="HISTIDINE-CONTAINING PHOSPHOTRANSFER PROTEIN 4"/>
    <property type="match status" value="1"/>
</dbReference>
<dbReference type="PANTHER" id="PTHR28242">
    <property type="entry name" value="PHOSPHORELAY INTERMEDIATE PROTEIN YPD1"/>
    <property type="match status" value="1"/>
</dbReference>
<dbReference type="Pfam" id="PF01627">
    <property type="entry name" value="Hpt"/>
    <property type="match status" value="1"/>
</dbReference>
<dbReference type="SUPFAM" id="SSF47226">
    <property type="entry name" value="Histidine-containing phosphotransfer domain, HPT domain"/>
    <property type="match status" value="1"/>
</dbReference>
<dbReference type="PROSITE" id="PS50894">
    <property type="entry name" value="HPT"/>
    <property type="match status" value="1"/>
</dbReference>
<reference key="1">
    <citation type="journal article" date="2000" name="Biosci. Biotechnol. Biochem.">
        <title>Compilation and characterization of histidine-containing phosphotransmitters implicated in His-to-Asp phosphorelay in plants: AHP signal transducers of Arabidopsis thaliana.</title>
        <authorList>
            <person name="Suzuki T."/>
            <person name="Sakurai K."/>
            <person name="Imamura A."/>
            <person name="Nakamura A."/>
            <person name="Ueguchi C."/>
            <person name="Mizuno T."/>
        </authorList>
    </citation>
    <scope>NUCLEOTIDE SEQUENCE [MRNA]</scope>
    <scope>FUNCTION</scope>
    <source>
        <strain>cv. Columbia</strain>
    </source>
</reference>
<reference key="2">
    <citation type="journal article" date="2000" name="DNA Res.">
        <title>Structural analysis of Arabidopsis thaliana chromosome 3. I. Sequence features of the regions of 4,504,864 bp covered by sixty P1 and TAC clones.</title>
        <authorList>
            <person name="Sato S."/>
            <person name="Nakamura Y."/>
            <person name="Kaneko T."/>
            <person name="Katoh T."/>
            <person name="Asamizu E."/>
            <person name="Tabata S."/>
        </authorList>
    </citation>
    <scope>NUCLEOTIDE SEQUENCE [LARGE SCALE GENOMIC DNA]</scope>
    <source>
        <strain>cv. Columbia</strain>
    </source>
</reference>
<reference key="3">
    <citation type="journal article" date="2000" name="Nature">
        <title>Sequence and analysis of chromosome 3 of the plant Arabidopsis thaliana.</title>
        <authorList>
            <person name="Salanoubat M."/>
            <person name="Lemcke K."/>
            <person name="Rieger M."/>
            <person name="Ansorge W."/>
            <person name="Unseld M."/>
            <person name="Fartmann B."/>
            <person name="Valle G."/>
            <person name="Bloecker H."/>
            <person name="Perez-Alonso M."/>
            <person name="Obermaier B."/>
            <person name="Delseny M."/>
            <person name="Boutry M."/>
            <person name="Grivell L.A."/>
            <person name="Mache R."/>
            <person name="Puigdomenech P."/>
            <person name="De Simone V."/>
            <person name="Choisne N."/>
            <person name="Artiguenave F."/>
            <person name="Robert C."/>
            <person name="Brottier P."/>
            <person name="Wincker P."/>
            <person name="Cattolico L."/>
            <person name="Weissenbach J."/>
            <person name="Saurin W."/>
            <person name="Quetier F."/>
            <person name="Schaefer M."/>
            <person name="Mueller-Auer S."/>
            <person name="Gabel C."/>
            <person name="Fuchs M."/>
            <person name="Benes V."/>
            <person name="Wurmbach E."/>
            <person name="Drzonek H."/>
            <person name="Erfle H."/>
            <person name="Jordan N."/>
            <person name="Bangert S."/>
            <person name="Wiedelmann R."/>
            <person name="Kranz H."/>
            <person name="Voss H."/>
            <person name="Holland R."/>
            <person name="Brandt P."/>
            <person name="Nyakatura G."/>
            <person name="Vezzi A."/>
            <person name="D'Angelo M."/>
            <person name="Pallavicini A."/>
            <person name="Toppo S."/>
            <person name="Simionati B."/>
            <person name="Conrad A."/>
            <person name="Hornischer K."/>
            <person name="Kauer G."/>
            <person name="Loehnert T.-H."/>
            <person name="Nordsiek G."/>
            <person name="Reichelt J."/>
            <person name="Scharfe M."/>
            <person name="Schoen O."/>
            <person name="Bargues M."/>
            <person name="Terol J."/>
            <person name="Climent J."/>
            <person name="Navarro P."/>
            <person name="Collado C."/>
            <person name="Perez-Perez A."/>
            <person name="Ottenwaelder B."/>
            <person name="Duchemin D."/>
            <person name="Cooke R."/>
            <person name="Laudie M."/>
            <person name="Berger-Llauro C."/>
            <person name="Purnelle B."/>
            <person name="Masuy D."/>
            <person name="de Haan M."/>
            <person name="Maarse A.C."/>
            <person name="Alcaraz J.-P."/>
            <person name="Cottet A."/>
            <person name="Casacuberta E."/>
            <person name="Monfort A."/>
            <person name="Argiriou A."/>
            <person name="Flores M."/>
            <person name="Liguori R."/>
            <person name="Vitale D."/>
            <person name="Mannhaupt G."/>
            <person name="Haase D."/>
            <person name="Schoof H."/>
            <person name="Rudd S."/>
            <person name="Zaccaria P."/>
            <person name="Mewes H.-W."/>
            <person name="Mayer K.F.X."/>
            <person name="Kaul S."/>
            <person name="Town C.D."/>
            <person name="Koo H.L."/>
            <person name="Tallon L.J."/>
            <person name="Jenkins J."/>
            <person name="Rooney T."/>
            <person name="Rizzo M."/>
            <person name="Walts A."/>
            <person name="Utterback T."/>
            <person name="Fujii C.Y."/>
            <person name="Shea T.P."/>
            <person name="Creasy T.H."/>
            <person name="Haas B."/>
            <person name="Maiti R."/>
            <person name="Wu D."/>
            <person name="Peterson J."/>
            <person name="Van Aken S."/>
            <person name="Pai G."/>
            <person name="Militscher J."/>
            <person name="Sellers P."/>
            <person name="Gill J.E."/>
            <person name="Feldblyum T.V."/>
            <person name="Preuss D."/>
            <person name="Lin X."/>
            <person name="Nierman W.C."/>
            <person name="Salzberg S.L."/>
            <person name="White O."/>
            <person name="Venter J.C."/>
            <person name="Fraser C.M."/>
            <person name="Kaneko T."/>
            <person name="Nakamura Y."/>
            <person name="Sato S."/>
            <person name="Kato T."/>
            <person name="Asamizu E."/>
            <person name="Sasamoto S."/>
            <person name="Kimura T."/>
            <person name="Idesawa K."/>
            <person name="Kawashima K."/>
            <person name="Kishida Y."/>
            <person name="Kiyokawa C."/>
            <person name="Kohara M."/>
            <person name="Matsumoto M."/>
            <person name="Matsuno A."/>
            <person name="Muraki A."/>
            <person name="Nakayama S."/>
            <person name="Nakazaki N."/>
            <person name="Shinpo S."/>
            <person name="Takeuchi C."/>
            <person name="Wada T."/>
            <person name="Watanabe A."/>
            <person name="Yamada M."/>
            <person name="Yasuda M."/>
            <person name="Tabata S."/>
        </authorList>
    </citation>
    <scope>NUCLEOTIDE SEQUENCE [LARGE SCALE GENOMIC DNA]</scope>
    <source>
        <strain>cv. Columbia</strain>
    </source>
</reference>
<reference key="4">
    <citation type="journal article" date="2017" name="Plant J.">
        <title>Araport11: a complete reannotation of the Arabidopsis thaliana reference genome.</title>
        <authorList>
            <person name="Cheng C.Y."/>
            <person name="Krishnakumar V."/>
            <person name="Chan A.P."/>
            <person name="Thibaud-Nissen F."/>
            <person name="Schobel S."/>
            <person name="Town C.D."/>
        </authorList>
    </citation>
    <scope>GENOME REANNOTATION</scope>
    <source>
        <strain>cv. Columbia</strain>
    </source>
</reference>
<reference key="5">
    <citation type="journal article" date="2002" name="Plant Physiol.">
        <title>Two-component signal transduction pathways in Arabidopsis.</title>
        <authorList>
            <person name="Hwang I."/>
            <person name="Chen H.-C."/>
            <person name="Sheen J."/>
        </authorList>
    </citation>
    <scope>GENE FAMILY</scope>
    <scope>NOMENCLATURE</scope>
    <scope>FUNCTION</scope>
</reference>
<reference key="6">
    <citation type="journal article" date="2004" name="Biosci. Biotechnol. Biochem.">
        <title>Comparative studies of the AHP histidine-containing phosphotransmitters implicated in His-to-Asp phosphorelay in Arabidopsis thaliana.</title>
        <authorList>
            <person name="Tanaka Y."/>
            <person name="Suzuki T."/>
            <person name="Yamashino T."/>
            <person name="Mizuno T."/>
        </authorList>
    </citation>
    <scope>FUNCTION</scope>
    <scope>TISSUE SPECIFICITY</scope>
    <scope>INTERACTION</scope>
</reference>
<feature type="chain" id="PRO_0000074930" description="Histidine-containing phosphotransfer protein 4">
    <location>
        <begin position="1"/>
        <end position="127"/>
    </location>
</feature>
<feature type="domain" description="HPt" evidence="2">
    <location>
        <begin position="27"/>
        <end position="122"/>
    </location>
</feature>
<feature type="modified residue" description="Phosphohistidine" evidence="2">
    <location>
        <position position="68"/>
    </location>
</feature>
<comment type="function">
    <text evidence="3 4 5">Functions as a two-component phosphorelay mediator between cytokinin sensor histidine kinases and response regulators (B-type ARRs). Plays an important role in propagating cytokinin signal transduction through the multistep His-to-Asp phosphorelay.</text>
</comment>
<comment type="subunit">
    <text evidence="5">Interacts with the B-type response regulators ARR1 and ARR2.</text>
</comment>
<comment type="subcellular location">
    <subcellularLocation>
        <location evidence="1">Cytoplasm</location>
        <location evidence="1">Cytosol</location>
    </subcellularLocation>
    <subcellularLocation>
        <location evidence="1">Nucleus</location>
    </subcellularLocation>
</comment>
<comment type="alternative products">
    <event type="alternative splicing"/>
    <isoform>
        <id>Q9LU15-1</id>
        <name>1</name>
        <sequence type="displayed"/>
    </isoform>
    <text>A number of isoforms are produced. According to EST sequences.</text>
</comment>
<comment type="tissue specificity">
    <text evidence="5">Predominantly expressed in aerial parts of the plant.</text>
</comment>
<comment type="domain">
    <text>Histidine-containing phosphotransfer domain (HPt) contains an active histidine that mediates the phosphotransfer.</text>
</comment>
<comment type="PTM">
    <text>Two-component system major event consists of a His-to-Asp phosphorelay between a sensor histidine kinase (HK) and a response regulator (RR). In plants, the His-to-Asp phosphorelay involves an additional intermediate named Histidine-containing phosphotransfer protein (HPt). This multistep phosphorelay consists of a His-Asp-His-Asp sequential transfer of a phosphate group between first a His and an Asp of the HK protein, followed by the transfer to a conserved His of the HPt protein and finally the transfer to an Asp in the receiver domain of the RR protein.</text>
</comment>
<comment type="sequence caution" evidence="6">
    <conflict type="erroneous gene model prediction">
        <sequence resource="EMBL-CDS" id="AAB63642"/>
    </conflict>
</comment>
<comment type="sequence caution" evidence="6">
    <conflict type="erroneous gene model prediction">
        <sequence resource="EMBL-CDS" id="BAB01275"/>
    </conflict>
</comment>
<organism>
    <name type="scientific">Arabidopsis thaliana</name>
    <name type="common">Mouse-ear cress</name>
    <dbReference type="NCBI Taxonomy" id="3702"/>
    <lineage>
        <taxon>Eukaryota</taxon>
        <taxon>Viridiplantae</taxon>
        <taxon>Streptophyta</taxon>
        <taxon>Embryophyta</taxon>
        <taxon>Tracheophyta</taxon>
        <taxon>Spermatophyta</taxon>
        <taxon>Magnoliopsida</taxon>
        <taxon>eudicotyledons</taxon>
        <taxon>Gunneridae</taxon>
        <taxon>Pentapetalae</taxon>
        <taxon>rosids</taxon>
        <taxon>malvids</taxon>
        <taxon>Brassicales</taxon>
        <taxon>Brassicaceae</taxon>
        <taxon>Camelineae</taxon>
        <taxon>Arabidopsis</taxon>
    </lineage>
</organism>
<proteinExistence type="evidence at protein level"/>
<sequence length="127" mass="14669">MTNIGKCMQGYLDEQFMELEELQDDANPNFVEEVSALYFKDSARLINNIDQALERGSFDFNRLDSYMHQFKGSSTSIGASKVKAECTTFREYCRAGNAEGCLRTFQQLKKEHSTLRKKLEHYFQASQ</sequence>
<gene>
    <name type="primary">AHP4</name>
    <name type="ordered locus">At3g16360</name>
    <name type="ORF">MYA6.16</name>
    <name type="ORF">T2O4.15</name>
</gene>
<evidence type="ECO:0000250" key="1"/>
<evidence type="ECO:0000255" key="2">
    <source>
        <dbReference type="PROSITE-ProRule" id="PRU00110"/>
    </source>
</evidence>
<evidence type="ECO:0000269" key="3">
    <source>
    </source>
</evidence>
<evidence type="ECO:0000269" key="4">
    <source>
    </source>
</evidence>
<evidence type="ECO:0000269" key="5">
    <source>
    </source>
</evidence>
<evidence type="ECO:0000305" key="6"/>
<keyword id="KW-0025">Alternative splicing</keyword>
<keyword id="KW-0932">Cytokinin signaling pathway</keyword>
<keyword id="KW-0963">Cytoplasm</keyword>
<keyword id="KW-0539">Nucleus</keyword>
<keyword id="KW-0597">Phosphoprotein</keyword>
<keyword id="KW-1185">Reference proteome</keyword>
<keyword id="KW-0902">Two-component regulatory system</keyword>
<name>AHP4_ARATH</name>